<feature type="chain" id="PRO_1000055480" description="Large ribosomal subunit protein uL13">
    <location>
        <begin position="1"/>
        <end position="151"/>
    </location>
</feature>
<sequence>MNTTPVPPPETLTPRWYLVDAANQRLGRLAVVVAKLLRGKHKPNFTPHLDTGDYVIVINAEKVVVTGKKRTQKLYRRHSGRPGGMKVETFAQLQARLPERVIEKAVKGMLPHTRLGRRQFTKLKVYAGPHHPHEAQQPQVYPIHTIPGAKV</sequence>
<gene>
    <name evidence="1" type="primary">rplM</name>
    <name evidence="1" type="synonym">rpl13</name>
    <name type="ordered locus">CYA_1448</name>
</gene>
<evidence type="ECO:0000255" key="1">
    <source>
        <dbReference type="HAMAP-Rule" id="MF_01366"/>
    </source>
</evidence>
<evidence type="ECO:0000305" key="2"/>
<accession>Q2JUJ8</accession>
<proteinExistence type="inferred from homology"/>
<dbReference type="EMBL" id="CP000239">
    <property type="protein sequence ID" value="ABC99616.1"/>
    <property type="molecule type" value="Genomic_DNA"/>
</dbReference>
<dbReference type="RefSeq" id="WP_011430294.1">
    <property type="nucleotide sequence ID" value="NC_007775.1"/>
</dbReference>
<dbReference type="SMR" id="Q2JUJ8"/>
<dbReference type="STRING" id="321327.CYA_1448"/>
<dbReference type="KEGG" id="cya:CYA_1448"/>
<dbReference type="eggNOG" id="COG0102">
    <property type="taxonomic scope" value="Bacteria"/>
</dbReference>
<dbReference type="HOGENOM" id="CLU_082184_2_2_3"/>
<dbReference type="OrthoDB" id="9801330at2"/>
<dbReference type="Proteomes" id="UP000008818">
    <property type="component" value="Chromosome"/>
</dbReference>
<dbReference type="GO" id="GO:0022625">
    <property type="term" value="C:cytosolic large ribosomal subunit"/>
    <property type="evidence" value="ECO:0007669"/>
    <property type="project" value="TreeGrafter"/>
</dbReference>
<dbReference type="GO" id="GO:0003729">
    <property type="term" value="F:mRNA binding"/>
    <property type="evidence" value="ECO:0007669"/>
    <property type="project" value="TreeGrafter"/>
</dbReference>
<dbReference type="GO" id="GO:0003735">
    <property type="term" value="F:structural constituent of ribosome"/>
    <property type="evidence" value="ECO:0007669"/>
    <property type="project" value="InterPro"/>
</dbReference>
<dbReference type="GO" id="GO:0017148">
    <property type="term" value="P:negative regulation of translation"/>
    <property type="evidence" value="ECO:0007669"/>
    <property type="project" value="TreeGrafter"/>
</dbReference>
<dbReference type="GO" id="GO:0006412">
    <property type="term" value="P:translation"/>
    <property type="evidence" value="ECO:0007669"/>
    <property type="project" value="UniProtKB-UniRule"/>
</dbReference>
<dbReference type="CDD" id="cd00392">
    <property type="entry name" value="Ribosomal_L13"/>
    <property type="match status" value="1"/>
</dbReference>
<dbReference type="FunFam" id="3.90.1180.10:FF:000001">
    <property type="entry name" value="50S ribosomal protein L13"/>
    <property type="match status" value="1"/>
</dbReference>
<dbReference type="Gene3D" id="3.90.1180.10">
    <property type="entry name" value="Ribosomal protein L13"/>
    <property type="match status" value="1"/>
</dbReference>
<dbReference type="HAMAP" id="MF_01366">
    <property type="entry name" value="Ribosomal_uL13"/>
    <property type="match status" value="1"/>
</dbReference>
<dbReference type="InterPro" id="IPR005822">
    <property type="entry name" value="Ribosomal_uL13"/>
</dbReference>
<dbReference type="InterPro" id="IPR005823">
    <property type="entry name" value="Ribosomal_uL13_bac-type"/>
</dbReference>
<dbReference type="InterPro" id="IPR023563">
    <property type="entry name" value="Ribosomal_uL13_CS"/>
</dbReference>
<dbReference type="InterPro" id="IPR036899">
    <property type="entry name" value="Ribosomal_uL13_sf"/>
</dbReference>
<dbReference type="NCBIfam" id="TIGR01066">
    <property type="entry name" value="rplM_bact"/>
    <property type="match status" value="1"/>
</dbReference>
<dbReference type="PANTHER" id="PTHR11545:SF2">
    <property type="entry name" value="LARGE RIBOSOMAL SUBUNIT PROTEIN UL13M"/>
    <property type="match status" value="1"/>
</dbReference>
<dbReference type="PANTHER" id="PTHR11545">
    <property type="entry name" value="RIBOSOMAL PROTEIN L13"/>
    <property type="match status" value="1"/>
</dbReference>
<dbReference type="Pfam" id="PF00572">
    <property type="entry name" value="Ribosomal_L13"/>
    <property type="match status" value="1"/>
</dbReference>
<dbReference type="PIRSF" id="PIRSF002181">
    <property type="entry name" value="Ribosomal_L13"/>
    <property type="match status" value="1"/>
</dbReference>
<dbReference type="SUPFAM" id="SSF52161">
    <property type="entry name" value="Ribosomal protein L13"/>
    <property type="match status" value="1"/>
</dbReference>
<dbReference type="PROSITE" id="PS00783">
    <property type="entry name" value="RIBOSOMAL_L13"/>
    <property type="match status" value="1"/>
</dbReference>
<organism>
    <name type="scientific">Synechococcus sp. (strain JA-3-3Ab)</name>
    <name type="common">Cyanobacteria bacterium Yellowstone A-Prime</name>
    <dbReference type="NCBI Taxonomy" id="321327"/>
    <lineage>
        <taxon>Bacteria</taxon>
        <taxon>Bacillati</taxon>
        <taxon>Cyanobacteriota</taxon>
        <taxon>Cyanophyceae</taxon>
        <taxon>Synechococcales</taxon>
        <taxon>Synechococcaceae</taxon>
        <taxon>Synechococcus</taxon>
    </lineage>
</organism>
<reference key="1">
    <citation type="journal article" date="2007" name="ISME J.">
        <title>Population level functional diversity in a microbial community revealed by comparative genomic and metagenomic analyses.</title>
        <authorList>
            <person name="Bhaya D."/>
            <person name="Grossman A.R."/>
            <person name="Steunou A.-S."/>
            <person name="Khuri N."/>
            <person name="Cohan F.M."/>
            <person name="Hamamura N."/>
            <person name="Melendrez M.C."/>
            <person name="Bateson M.M."/>
            <person name="Ward D.M."/>
            <person name="Heidelberg J.F."/>
        </authorList>
    </citation>
    <scope>NUCLEOTIDE SEQUENCE [LARGE SCALE GENOMIC DNA]</scope>
    <source>
        <strain>JA-3-3Ab</strain>
    </source>
</reference>
<name>RL13_SYNJA</name>
<keyword id="KW-0687">Ribonucleoprotein</keyword>
<keyword id="KW-0689">Ribosomal protein</keyword>
<protein>
    <recommendedName>
        <fullName evidence="1">Large ribosomal subunit protein uL13</fullName>
    </recommendedName>
    <alternativeName>
        <fullName evidence="2">50S ribosomal protein L13</fullName>
    </alternativeName>
</protein>
<comment type="function">
    <text evidence="1">This protein is one of the early assembly proteins of the 50S ribosomal subunit, although it is not seen to bind rRNA by itself. It is important during the early stages of 50S assembly.</text>
</comment>
<comment type="subunit">
    <text evidence="1">Part of the 50S ribosomal subunit.</text>
</comment>
<comment type="similarity">
    <text evidence="1">Belongs to the universal ribosomal protein uL13 family.</text>
</comment>